<keyword id="KW-0028">Amino-acid biosynthesis</keyword>
<keyword id="KW-0067">ATP-binding</keyword>
<keyword id="KW-0963">Cytoplasm</keyword>
<keyword id="KW-0418">Kinase</keyword>
<keyword id="KW-0547">Nucleotide-binding</keyword>
<keyword id="KW-0641">Proline biosynthesis</keyword>
<keyword id="KW-0808">Transferase</keyword>
<proteinExistence type="inferred from homology"/>
<gene>
    <name evidence="1" type="primary">proB</name>
    <name type="ordered locus">Arad_4877</name>
</gene>
<dbReference type="EC" id="2.7.2.11" evidence="1"/>
<dbReference type="EMBL" id="CP000628">
    <property type="protein sequence ID" value="ACM28481.1"/>
    <property type="molecule type" value="Genomic_DNA"/>
</dbReference>
<dbReference type="RefSeq" id="WP_012652973.1">
    <property type="nucleotide sequence ID" value="NC_011985.1"/>
</dbReference>
<dbReference type="SMR" id="B9JER2"/>
<dbReference type="STRING" id="311403.Arad_4877"/>
<dbReference type="KEGG" id="ara:Arad_4877"/>
<dbReference type="eggNOG" id="COG0263">
    <property type="taxonomic scope" value="Bacteria"/>
</dbReference>
<dbReference type="HOGENOM" id="CLU_025400_2_0_5"/>
<dbReference type="UniPathway" id="UPA00098">
    <property type="reaction ID" value="UER00359"/>
</dbReference>
<dbReference type="Proteomes" id="UP000001600">
    <property type="component" value="Chromosome 1"/>
</dbReference>
<dbReference type="GO" id="GO:0005829">
    <property type="term" value="C:cytosol"/>
    <property type="evidence" value="ECO:0007669"/>
    <property type="project" value="TreeGrafter"/>
</dbReference>
<dbReference type="GO" id="GO:0005524">
    <property type="term" value="F:ATP binding"/>
    <property type="evidence" value="ECO:0007669"/>
    <property type="project" value="UniProtKB-KW"/>
</dbReference>
<dbReference type="GO" id="GO:0004349">
    <property type="term" value="F:glutamate 5-kinase activity"/>
    <property type="evidence" value="ECO:0007669"/>
    <property type="project" value="UniProtKB-UniRule"/>
</dbReference>
<dbReference type="GO" id="GO:0003723">
    <property type="term" value="F:RNA binding"/>
    <property type="evidence" value="ECO:0007669"/>
    <property type="project" value="InterPro"/>
</dbReference>
<dbReference type="GO" id="GO:0055129">
    <property type="term" value="P:L-proline biosynthetic process"/>
    <property type="evidence" value="ECO:0007669"/>
    <property type="project" value="UniProtKB-UniRule"/>
</dbReference>
<dbReference type="CDD" id="cd04242">
    <property type="entry name" value="AAK_G5K_ProB"/>
    <property type="match status" value="1"/>
</dbReference>
<dbReference type="CDD" id="cd21157">
    <property type="entry name" value="PUA_G5K"/>
    <property type="match status" value="1"/>
</dbReference>
<dbReference type="FunFam" id="2.30.130.10:FF:000007">
    <property type="entry name" value="Glutamate 5-kinase"/>
    <property type="match status" value="1"/>
</dbReference>
<dbReference type="FunFam" id="3.40.1160.10:FF:000018">
    <property type="entry name" value="Glutamate 5-kinase"/>
    <property type="match status" value="1"/>
</dbReference>
<dbReference type="Gene3D" id="3.40.1160.10">
    <property type="entry name" value="Acetylglutamate kinase-like"/>
    <property type="match status" value="1"/>
</dbReference>
<dbReference type="Gene3D" id="2.30.130.10">
    <property type="entry name" value="PUA domain"/>
    <property type="match status" value="1"/>
</dbReference>
<dbReference type="HAMAP" id="MF_00456">
    <property type="entry name" value="ProB"/>
    <property type="match status" value="1"/>
</dbReference>
<dbReference type="InterPro" id="IPR036393">
    <property type="entry name" value="AceGlu_kinase-like_sf"/>
</dbReference>
<dbReference type="InterPro" id="IPR001048">
    <property type="entry name" value="Asp/Glu/Uridylate_kinase"/>
</dbReference>
<dbReference type="InterPro" id="IPR041739">
    <property type="entry name" value="G5K_ProB"/>
</dbReference>
<dbReference type="InterPro" id="IPR001057">
    <property type="entry name" value="Glu/AcGlu_kinase"/>
</dbReference>
<dbReference type="InterPro" id="IPR011529">
    <property type="entry name" value="Glu_5kinase"/>
</dbReference>
<dbReference type="InterPro" id="IPR005715">
    <property type="entry name" value="Glu_5kinase/COase_Synthase"/>
</dbReference>
<dbReference type="InterPro" id="IPR019797">
    <property type="entry name" value="Glutamate_5-kinase_CS"/>
</dbReference>
<dbReference type="InterPro" id="IPR002478">
    <property type="entry name" value="PUA"/>
</dbReference>
<dbReference type="InterPro" id="IPR015947">
    <property type="entry name" value="PUA-like_sf"/>
</dbReference>
<dbReference type="InterPro" id="IPR036974">
    <property type="entry name" value="PUA_sf"/>
</dbReference>
<dbReference type="NCBIfam" id="TIGR01027">
    <property type="entry name" value="proB"/>
    <property type="match status" value="1"/>
</dbReference>
<dbReference type="PANTHER" id="PTHR43654">
    <property type="entry name" value="GLUTAMATE 5-KINASE"/>
    <property type="match status" value="1"/>
</dbReference>
<dbReference type="PANTHER" id="PTHR43654:SF1">
    <property type="entry name" value="ISOPENTENYL PHOSPHATE KINASE"/>
    <property type="match status" value="1"/>
</dbReference>
<dbReference type="Pfam" id="PF00696">
    <property type="entry name" value="AA_kinase"/>
    <property type="match status" value="1"/>
</dbReference>
<dbReference type="Pfam" id="PF01472">
    <property type="entry name" value="PUA"/>
    <property type="match status" value="1"/>
</dbReference>
<dbReference type="PIRSF" id="PIRSF000729">
    <property type="entry name" value="GK"/>
    <property type="match status" value="1"/>
</dbReference>
<dbReference type="PRINTS" id="PR00474">
    <property type="entry name" value="GLU5KINASE"/>
</dbReference>
<dbReference type="SMART" id="SM00359">
    <property type="entry name" value="PUA"/>
    <property type="match status" value="1"/>
</dbReference>
<dbReference type="SUPFAM" id="SSF53633">
    <property type="entry name" value="Carbamate kinase-like"/>
    <property type="match status" value="1"/>
</dbReference>
<dbReference type="SUPFAM" id="SSF88697">
    <property type="entry name" value="PUA domain-like"/>
    <property type="match status" value="1"/>
</dbReference>
<dbReference type="PROSITE" id="PS00902">
    <property type="entry name" value="GLUTAMATE_5_KINASE"/>
    <property type="match status" value="1"/>
</dbReference>
<dbReference type="PROSITE" id="PS50890">
    <property type="entry name" value="PUA"/>
    <property type="match status" value="1"/>
</dbReference>
<comment type="function">
    <text evidence="1">Catalyzes the transfer of a phosphate group to glutamate to form L-glutamate 5-phosphate.</text>
</comment>
<comment type="catalytic activity">
    <reaction evidence="1">
        <text>L-glutamate + ATP = L-glutamyl 5-phosphate + ADP</text>
        <dbReference type="Rhea" id="RHEA:14877"/>
        <dbReference type="ChEBI" id="CHEBI:29985"/>
        <dbReference type="ChEBI" id="CHEBI:30616"/>
        <dbReference type="ChEBI" id="CHEBI:58274"/>
        <dbReference type="ChEBI" id="CHEBI:456216"/>
        <dbReference type="EC" id="2.7.2.11"/>
    </reaction>
</comment>
<comment type="pathway">
    <text evidence="1">Amino-acid biosynthesis; L-proline biosynthesis; L-glutamate 5-semialdehyde from L-glutamate: step 1/2.</text>
</comment>
<comment type="subcellular location">
    <subcellularLocation>
        <location evidence="1">Cytoplasm</location>
    </subcellularLocation>
</comment>
<comment type="similarity">
    <text evidence="1">Belongs to the glutamate 5-kinase family.</text>
</comment>
<feature type="chain" id="PRO_1000193682" description="Glutamate 5-kinase">
    <location>
        <begin position="1"/>
        <end position="389"/>
    </location>
</feature>
<feature type="domain" description="PUA" evidence="1">
    <location>
        <begin position="281"/>
        <end position="358"/>
    </location>
</feature>
<feature type="binding site" evidence="1">
    <location>
        <position position="16"/>
    </location>
    <ligand>
        <name>ATP</name>
        <dbReference type="ChEBI" id="CHEBI:30616"/>
    </ligand>
</feature>
<feature type="binding site" evidence="1">
    <location>
        <position position="56"/>
    </location>
    <ligand>
        <name>substrate</name>
    </ligand>
</feature>
<feature type="binding site" evidence="1">
    <location>
        <position position="143"/>
    </location>
    <ligand>
        <name>substrate</name>
    </ligand>
</feature>
<feature type="binding site" evidence="1">
    <location>
        <position position="155"/>
    </location>
    <ligand>
        <name>substrate</name>
    </ligand>
</feature>
<feature type="binding site" evidence="1">
    <location>
        <begin position="175"/>
        <end position="176"/>
    </location>
    <ligand>
        <name>ATP</name>
        <dbReference type="ChEBI" id="CHEBI:30616"/>
    </ligand>
</feature>
<evidence type="ECO:0000255" key="1">
    <source>
        <dbReference type="HAMAP-Rule" id="MF_00456"/>
    </source>
</evidence>
<accession>B9JER2</accession>
<name>PROB_RHIR8</name>
<organism>
    <name type="scientific">Rhizobium rhizogenes (strain K84 / ATCC BAA-868)</name>
    <name type="common">Agrobacterium radiobacter</name>
    <dbReference type="NCBI Taxonomy" id="311403"/>
    <lineage>
        <taxon>Bacteria</taxon>
        <taxon>Pseudomonadati</taxon>
        <taxon>Pseudomonadota</taxon>
        <taxon>Alphaproteobacteria</taxon>
        <taxon>Hyphomicrobiales</taxon>
        <taxon>Rhizobiaceae</taxon>
        <taxon>Rhizobium/Agrobacterium group</taxon>
        <taxon>Rhizobium</taxon>
    </lineage>
</organism>
<protein>
    <recommendedName>
        <fullName evidence="1">Glutamate 5-kinase</fullName>
        <ecNumber evidence="1">2.7.2.11</ecNumber>
    </recommendedName>
    <alternativeName>
        <fullName evidence="1">Gamma-glutamyl kinase</fullName>
        <shortName evidence="1">GK</shortName>
    </alternativeName>
</protein>
<sequence length="389" mass="40771">MTARKSLDRYRRIVIKIGSALLVDRKTGLKKAWLDGMCADIAALKAKGVDVLVVSSGAIALGRSVLDLPSGALKLEESQAAAAVGQISLARAWSESLSHDDIVAGQILLTLGDTEERRRYLNARATINQLLKIGAVPIINENDTVATSEIRYGDNDRLAARVATMTGADLLILLSDIDGLYTAPPHLDPDAKFLETIADITPEIEAMAGGAASELSRGGMRTKIDAGKIATGAGCAMIIASGKTDRPLNAIANGARSSWFAPSGTPVTARKTWIAGQLQPAGELHVDEGAVTALGAGKSLLPAGVRKVTGHFGRGDTIAVIGPSGREIARGLVGYDAEEARQITGRKSAEIEAILGYAGRAAMVHRDDLVMTASVKTKAEKLKKDEAHA</sequence>
<reference key="1">
    <citation type="journal article" date="2009" name="J. Bacteriol.">
        <title>Genome sequences of three Agrobacterium biovars help elucidate the evolution of multichromosome genomes in bacteria.</title>
        <authorList>
            <person name="Slater S.C."/>
            <person name="Goldman B.S."/>
            <person name="Goodner B."/>
            <person name="Setubal J.C."/>
            <person name="Farrand S.K."/>
            <person name="Nester E.W."/>
            <person name="Burr T.J."/>
            <person name="Banta L."/>
            <person name="Dickerman A.W."/>
            <person name="Paulsen I."/>
            <person name="Otten L."/>
            <person name="Suen G."/>
            <person name="Welch R."/>
            <person name="Almeida N.F."/>
            <person name="Arnold F."/>
            <person name="Burton O.T."/>
            <person name="Du Z."/>
            <person name="Ewing A."/>
            <person name="Godsy E."/>
            <person name="Heisel S."/>
            <person name="Houmiel K.L."/>
            <person name="Jhaveri J."/>
            <person name="Lu J."/>
            <person name="Miller N.M."/>
            <person name="Norton S."/>
            <person name="Chen Q."/>
            <person name="Phoolcharoen W."/>
            <person name="Ohlin V."/>
            <person name="Ondrusek D."/>
            <person name="Pride N."/>
            <person name="Stricklin S.L."/>
            <person name="Sun J."/>
            <person name="Wheeler C."/>
            <person name="Wilson L."/>
            <person name="Zhu H."/>
            <person name="Wood D.W."/>
        </authorList>
    </citation>
    <scope>NUCLEOTIDE SEQUENCE [LARGE SCALE GENOMIC DNA]</scope>
    <source>
        <strain>K84 / ATCC BAA-868</strain>
    </source>
</reference>